<gene>
    <name type="ordered locus">MPN_639</name>
    <name type="ORF">E09_orf287o</name>
    <name type="ORF">MP203</name>
</gene>
<feature type="signal peptide" evidence="1">
    <location>
        <begin position="1"/>
        <end position="31"/>
    </location>
</feature>
<feature type="chain" id="PRO_0000014048" description="Uncharacterized protein MPN_639">
    <location>
        <begin position="32"/>
        <end position="287"/>
    </location>
</feature>
<proteinExistence type="inferred from homology"/>
<dbReference type="EMBL" id="U00089">
    <property type="protein sequence ID" value="AAB95851.1"/>
    <property type="molecule type" value="Genomic_DNA"/>
</dbReference>
<dbReference type="PIR" id="S73529">
    <property type="entry name" value="S73529"/>
</dbReference>
<dbReference type="RefSeq" id="NP_110328.1">
    <property type="nucleotide sequence ID" value="NC_000912.1"/>
</dbReference>
<dbReference type="STRING" id="272634.MPN_639"/>
<dbReference type="EnsemblBacteria" id="AAB95851">
    <property type="protein sequence ID" value="AAB95851"/>
    <property type="gene ID" value="MPN_639"/>
</dbReference>
<dbReference type="KEGG" id="mpn:MPN_639"/>
<dbReference type="PATRIC" id="fig|272634.6.peg.702"/>
<dbReference type="HOGENOM" id="CLU_080699_0_0_14"/>
<dbReference type="BioCyc" id="MPNE272634:G1GJ3-1023-MONOMER"/>
<dbReference type="Proteomes" id="UP000000808">
    <property type="component" value="Chromosome"/>
</dbReference>
<dbReference type="InterPro" id="IPR001595">
    <property type="entry name" value="Lipoprotein_3"/>
</dbReference>
<dbReference type="Pfam" id="PF00938">
    <property type="entry name" value="Lipoprotein_3"/>
    <property type="match status" value="1"/>
</dbReference>
<reference key="1">
    <citation type="journal article" date="1996" name="Nucleic Acids Res.">
        <title>Complete sequence analysis of the genome of the bacterium Mycoplasma pneumoniae.</title>
        <authorList>
            <person name="Himmelreich R."/>
            <person name="Hilbert H."/>
            <person name="Plagens H."/>
            <person name="Pirkl E."/>
            <person name="Li B.-C."/>
            <person name="Herrmann R."/>
        </authorList>
    </citation>
    <scope>NUCLEOTIDE SEQUENCE [LARGE SCALE GENOMIC DNA]</scope>
    <source>
        <strain>ATCC 29342 / M129 / Subtype 1</strain>
    </source>
</reference>
<accession>P75158</accession>
<sequence length="287" mass="32254">MLGSMALKLRKWIWASIPSLALILSSCSALVASVELKSLSELQNLADRNTELTKNKRTLITTLRESYGLNPKGTLNLLFEGWRYTLLSQRILERWQTEVGRFAKSFGNGSNQNSVQPNATLKGLKLSERSTTEIQLLAEQAITVSKQEVKEFTYKVESNKQFEATVKIKADLKIDPTKAMSHIENIFKDDETKKKDAQNSLTMSMGQNEALEATFTYSPATQGIFGRASFDRFTSNIKLNTKLRIQVSSTSDLMKKLLENSLTSSLKDQSFDNEGVNLFPYTLFALL</sequence>
<name>Y639_MYCPN</name>
<organism>
    <name type="scientific">Mycoplasma pneumoniae (strain ATCC 29342 / M129 / Subtype 1)</name>
    <name type="common">Mycoplasmoides pneumoniae</name>
    <dbReference type="NCBI Taxonomy" id="272634"/>
    <lineage>
        <taxon>Bacteria</taxon>
        <taxon>Bacillati</taxon>
        <taxon>Mycoplasmatota</taxon>
        <taxon>Mycoplasmoidales</taxon>
        <taxon>Mycoplasmoidaceae</taxon>
        <taxon>Mycoplasmoides</taxon>
    </lineage>
</organism>
<comment type="similarity">
    <text evidence="2">Belongs to the MG439/MG440 family.</text>
</comment>
<keyword id="KW-1185">Reference proteome</keyword>
<keyword id="KW-0732">Signal</keyword>
<evidence type="ECO:0000255" key="1">
    <source>
        <dbReference type="PROSITE-ProRule" id="PRU00303"/>
    </source>
</evidence>
<evidence type="ECO:0000305" key="2"/>
<protein>
    <recommendedName>
        <fullName>Uncharacterized protein MPN_639</fullName>
    </recommendedName>
</protein>